<accession>Q9SZ28</accession>
<protein>
    <recommendedName>
        <fullName evidence="2">Stigma-specific STIG1-like protein 1</fullName>
    </recommendedName>
</protein>
<evidence type="ECO:0000255" key="1"/>
<evidence type="ECO:0000303" key="2">
    <source>
    </source>
</evidence>
<evidence type="ECO:0000305" key="3"/>
<evidence type="ECO:0000312" key="4">
    <source>
        <dbReference type="Araport" id="AT4G26880"/>
    </source>
</evidence>
<evidence type="ECO:0000312" key="5">
    <source>
        <dbReference type="EMBL" id="CAB36534.1"/>
    </source>
</evidence>
<evidence type="ECO:0000312" key="6">
    <source>
        <dbReference type="Proteomes" id="UP000006548"/>
    </source>
</evidence>
<comment type="similarity">
    <text evidence="3">Belongs to the STIG1 family.</text>
</comment>
<organism evidence="6">
    <name type="scientific">Arabidopsis thaliana</name>
    <name type="common">Mouse-ear cress</name>
    <dbReference type="NCBI Taxonomy" id="3702"/>
    <lineage>
        <taxon>Eukaryota</taxon>
        <taxon>Viridiplantae</taxon>
        <taxon>Streptophyta</taxon>
        <taxon>Embryophyta</taxon>
        <taxon>Tracheophyta</taxon>
        <taxon>Spermatophyta</taxon>
        <taxon>Magnoliopsida</taxon>
        <taxon>eudicotyledons</taxon>
        <taxon>Gunneridae</taxon>
        <taxon>Pentapetalae</taxon>
        <taxon>rosids</taxon>
        <taxon>malvids</taxon>
        <taxon>Brassicales</taxon>
        <taxon>Brassicaceae</taxon>
        <taxon>Camelineae</taxon>
        <taxon>Arabidopsis</taxon>
    </lineage>
</organism>
<proteinExistence type="inferred from homology"/>
<reference key="1">
    <citation type="journal article" date="1999" name="Nature">
        <title>Sequence and analysis of chromosome 4 of the plant Arabidopsis thaliana.</title>
        <authorList>
            <person name="Mayer K.F.X."/>
            <person name="Schueller C."/>
            <person name="Wambutt R."/>
            <person name="Murphy G."/>
            <person name="Volckaert G."/>
            <person name="Pohl T."/>
            <person name="Duesterhoeft A."/>
            <person name="Stiekema W."/>
            <person name="Entian K.-D."/>
            <person name="Terryn N."/>
            <person name="Harris B."/>
            <person name="Ansorge W."/>
            <person name="Brandt P."/>
            <person name="Grivell L.A."/>
            <person name="Rieger M."/>
            <person name="Weichselgartner M."/>
            <person name="de Simone V."/>
            <person name="Obermaier B."/>
            <person name="Mache R."/>
            <person name="Mueller M."/>
            <person name="Kreis M."/>
            <person name="Delseny M."/>
            <person name="Puigdomenech P."/>
            <person name="Watson M."/>
            <person name="Schmidtheini T."/>
            <person name="Reichert B."/>
            <person name="Portetelle D."/>
            <person name="Perez-Alonso M."/>
            <person name="Boutry M."/>
            <person name="Bancroft I."/>
            <person name="Vos P."/>
            <person name="Hoheisel J."/>
            <person name="Zimmermann W."/>
            <person name="Wedler H."/>
            <person name="Ridley P."/>
            <person name="Langham S.-A."/>
            <person name="McCullagh B."/>
            <person name="Bilham L."/>
            <person name="Robben J."/>
            <person name="van der Schueren J."/>
            <person name="Grymonprez B."/>
            <person name="Chuang Y.-J."/>
            <person name="Vandenbussche F."/>
            <person name="Braeken M."/>
            <person name="Weltjens I."/>
            <person name="Voet M."/>
            <person name="Bastiaens I."/>
            <person name="Aert R."/>
            <person name="Defoor E."/>
            <person name="Weitzenegger T."/>
            <person name="Bothe G."/>
            <person name="Ramsperger U."/>
            <person name="Hilbert H."/>
            <person name="Braun M."/>
            <person name="Holzer E."/>
            <person name="Brandt A."/>
            <person name="Peters S."/>
            <person name="van Staveren M."/>
            <person name="Dirkse W."/>
            <person name="Mooijman P."/>
            <person name="Klein Lankhorst R."/>
            <person name="Rose M."/>
            <person name="Hauf J."/>
            <person name="Koetter P."/>
            <person name="Berneiser S."/>
            <person name="Hempel S."/>
            <person name="Feldpausch M."/>
            <person name="Lamberth S."/>
            <person name="Van den Daele H."/>
            <person name="De Keyser A."/>
            <person name="Buysshaert C."/>
            <person name="Gielen J."/>
            <person name="Villarroel R."/>
            <person name="De Clercq R."/>
            <person name="van Montagu M."/>
            <person name="Rogers J."/>
            <person name="Cronin A."/>
            <person name="Quail M.A."/>
            <person name="Bray-Allen S."/>
            <person name="Clark L."/>
            <person name="Doggett J."/>
            <person name="Hall S."/>
            <person name="Kay M."/>
            <person name="Lennard N."/>
            <person name="McLay K."/>
            <person name="Mayes R."/>
            <person name="Pettett A."/>
            <person name="Rajandream M.A."/>
            <person name="Lyne M."/>
            <person name="Benes V."/>
            <person name="Rechmann S."/>
            <person name="Borkova D."/>
            <person name="Bloecker H."/>
            <person name="Scharfe M."/>
            <person name="Grimm M."/>
            <person name="Loehnert T.-H."/>
            <person name="Dose S."/>
            <person name="de Haan M."/>
            <person name="Maarse A.C."/>
            <person name="Schaefer M."/>
            <person name="Mueller-Auer S."/>
            <person name="Gabel C."/>
            <person name="Fuchs M."/>
            <person name="Fartmann B."/>
            <person name="Granderath K."/>
            <person name="Dauner D."/>
            <person name="Herzl A."/>
            <person name="Neumann S."/>
            <person name="Argiriou A."/>
            <person name="Vitale D."/>
            <person name="Liguori R."/>
            <person name="Piravandi E."/>
            <person name="Massenet O."/>
            <person name="Quigley F."/>
            <person name="Clabauld G."/>
            <person name="Muendlein A."/>
            <person name="Felber R."/>
            <person name="Schnabl S."/>
            <person name="Hiller R."/>
            <person name="Schmidt W."/>
            <person name="Lecharny A."/>
            <person name="Aubourg S."/>
            <person name="Chefdor F."/>
            <person name="Cooke R."/>
            <person name="Berger C."/>
            <person name="Monfort A."/>
            <person name="Casacuberta E."/>
            <person name="Gibbons T."/>
            <person name="Weber N."/>
            <person name="Vandenbol M."/>
            <person name="Bargues M."/>
            <person name="Terol J."/>
            <person name="Torres A."/>
            <person name="Perez-Perez A."/>
            <person name="Purnelle B."/>
            <person name="Bent E."/>
            <person name="Johnson S."/>
            <person name="Tacon D."/>
            <person name="Jesse T."/>
            <person name="Heijnen L."/>
            <person name="Schwarz S."/>
            <person name="Scholler P."/>
            <person name="Heber S."/>
            <person name="Francs P."/>
            <person name="Bielke C."/>
            <person name="Frishman D."/>
            <person name="Haase D."/>
            <person name="Lemcke K."/>
            <person name="Mewes H.-W."/>
            <person name="Stocker S."/>
            <person name="Zaccaria P."/>
            <person name="Bevan M."/>
            <person name="Wilson R.K."/>
            <person name="de la Bastide M."/>
            <person name="Habermann K."/>
            <person name="Parnell L."/>
            <person name="Dedhia N."/>
            <person name="Gnoj L."/>
            <person name="Schutz K."/>
            <person name="Huang E."/>
            <person name="Spiegel L."/>
            <person name="Sekhon M."/>
            <person name="Murray J."/>
            <person name="Sheet P."/>
            <person name="Cordes M."/>
            <person name="Abu-Threideh J."/>
            <person name="Stoneking T."/>
            <person name="Kalicki J."/>
            <person name="Graves T."/>
            <person name="Harmon G."/>
            <person name="Edwards J."/>
            <person name="Latreille P."/>
            <person name="Courtney L."/>
            <person name="Cloud J."/>
            <person name="Abbott A."/>
            <person name="Scott K."/>
            <person name="Johnson D."/>
            <person name="Minx P."/>
            <person name="Bentley D."/>
            <person name="Fulton B."/>
            <person name="Miller N."/>
            <person name="Greco T."/>
            <person name="Kemp K."/>
            <person name="Kramer J."/>
            <person name="Fulton L."/>
            <person name="Mardis E."/>
            <person name="Dante M."/>
            <person name="Pepin K."/>
            <person name="Hillier L.W."/>
            <person name="Nelson J."/>
            <person name="Spieth J."/>
            <person name="Ryan E."/>
            <person name="Andrews S."/>
            <person name="Geisel C."/>
            <person name="Layman D."/>
            <person name="Du H."/>
            <person name="Ali J."/>
            <person name="Berghoff A."/>
            <person name="Jones K."/>
            <person name="Drone K."/>
            <person name="Cotton M."/>
            <person name="Joshu C."/>
            <person name="Antonoiu B."/>
            <person name="Zidanic M."/>
            <person name="Strong C."/>
            <person name="Sun H."/>
            <person name="Lamar B."/>
            <person name="Yordan C."/>
            <person name="Ma P."/>
            <person name="Zhong J."/>
            <person name="Preston R."/>
            <person name="Vil D."/>
            <person name="Shekher M."/>
            <person name="Matero A."/>
            <person name="Shah R."/>
            <person name="Swaby I.K."/>
            <person name="O'Shaughnessy A."/>
            <person name="Rodriguez M."/>
            <person name="Hoffman J."/>
            <person name="Till S."/>
            <person name="Granat S."/>
            <person name="Shohdy N."/>
            <person name="Hasegawa A."/>
            <person name="Hameed A."/>
            <person name="Lodhi M."/>
            <person name="Johnson A."/>
            <person name="Chen E."/>
            <person name="Marra M.A."/>
            <person name="Martienssen R."/>
            <person name="McCombie W.R."/>
        </authorList>
    </citation>
    <scope>NUCLEOTIDE SEQUENCE [LARGE SCALE GENOMIC DNA]</scope>
    <source>
        <strain>cv. Columbia</strain>
    </source>
</reference>
<reference key="2">
    <citation type="journal article" date="2017" name="Plant J.">
        <title>Araport11: a complete reannotation of the Arabidopsis thaliana reference genome.</title>
        <authorList>
            <person name="Cheng C.Y."/>
            <person name="Krishnakumar V."/>
            <person name="Chan A.P."/>
            <person name="Thibaud-Nissen F."/>
            <person name="Schobel S."/>
            <person name="Town C.D."/>
        </authorList>
    </citation>
    <scope>GENOME REANNOTATION</scope>
    <source>
        <strain>cv. Columbia</strain>
    </source>
</reference>
<reference key="3">
    <citation type="journal article" date="2009" name="Proc. Natl. Acad. Sci. U.S.A.">
        <title>Arabidopsis GRI is involved in the regulation of cell death induced by extracellular ROS.</title>
        <authorList>
            <person name="Wrzaczek M."/>
            <person name="Brosche M."/>
            <person name="Kollist H."/>
            <person name="Kangasjarvi J."/>
        </authorList>
    </citation>
    <scope>GENE FAMILY</scope>
</reference>
<keyword id="KW-1185">Reference proteome</keyword>
<keyword id="KW-0732">Signal</keyword>
<dbReference type="EMBL" id="AL035440">
    <property type="protein sequence ID" value="CAB36534.1"/>
    <property type="molecule type" value="Genomic_DNA"/>
</dbReference>
<dbReference type="EMBL" id="AL161566">
    <property type="protein sequence ID" value="CAB79543.1"/>
    <property type="molecule type" value="Genomic_DNA"/>
</dbReference>
<dbReference type="EMBL" id="CP002687">
    <property type="protein sequence ID" value="AEE85264.1"/>
    <property type="molecule type" value="Genomic_DNA"/>
</dbReference>
<dbReference type="PIR" id="T04811">
    <property type="entry name" value="T04811"/>
</dbReference>
<dbReference type="RefSeq" id="NP_194418.1">
    <property type="nucleotide sequence ID" value="NM_118822.2"/>
</dbReference>
<dbReference type="STRING" id="3702.Q9SZ28"/>
<dbReference type="PaxDb" id="3702-AT4G26880.1"/>
<dbReference type="ProteomicsDB" id="228344"/>
<dbReference type="EnsemblPlants" id="AT4G26880.1">
    <property type="protein sequence ID" value="AT4G26880.1"/>
    <property type="gene ID" value="AT4G26880"/>
</dbReference>
<dbReference type="GeneID" id="828795"/>
<dbReference type="Gramene" id="AT4G26880.1">
    <property type="protein sequence ID" value="AT4G26880.1"/>
    <property type="gene ID" value="AT4G26880"/>
</dbReference>
<dbReference type="KEGG" id="ath:AT4G26880"/>
<dbReference type="Araport" id="AT4G26880"/>
<dbReference type="TAIR" id="AT4G26880"/>
<dbReference type="eggNOG" id="ENOG502S1NG">
    <property type="taxonomic scope" value="Eukaryota"/>
</dbReference>
<dbReference type="HOGENOM" id="CLU_111795_1_0_1"/>
<dbReference type="InParanoid" id="Q9SZ28"/>
<dbReference type="OMA" id="AYACSKK"/>
<dbReference type="OrthoDB" id="1841769at2759"/>
<dbReference type="PhylomeDB" id="Q9SZ28"/>
<dbReference type="PRO" id="PR:Q9SZ28"/>
<dbReference type="Proteomes" id="UP000006548">
    <property type="component" value="Chromosome 4"/>
</dbReference>
<dbReference type="ExpressionAtlas" id="Q9SZ28">
    <property type="expression patterns" value="baseline and differential"/>
</dbReference>
<dbReference type="InterPro" id="IPR006969">
    <property type="entry name" value="Stig-like"/>
</dbReference>
<dbReference type="PANTHER" id="PTHR33227:SF49">
    <property type="entry name" value="STIGMA-SPECIFIC STIG1-LIKE PROTEIN 1"/>
    <property type="match status" value="1"/>
</dbReference>
<dbReference type="PANTHER" id="PTHR33227">
    <property type="entry name" value="STIGMA-SPECIFIC STIG1-LIKE PROTEIN 3"/>
    <property type="match status" value="1"/>
</dbReference>
<dbReference type="Pfam" id="PF04885">
    <property type="entry name" value="Stig1"/>
    <property type="match status" value="1"/>
</dbReference>
<feature type="signal peptide" evidence="1">
    <location>
        <begin position="1"/>
        <end position="19"/>
    </location>
</feature>
<feature type="chain" id="PRO_0000431930" description="Stigma-specific STIG1-like protein 1" evidence="1">
    <location>
        <begin position="20"/>
        <end position="152"/>
    </location>
</feature>
<sequence length="152" mass="16540">MAFVKLLVSIAITTAITIAVITTITNNTTTIREYTSFDAPSTPTIRPNRLLAQKEVGERNPNAADHCNRNPEICTPYGGGGSNSTMTCCNNKCIDVSSDDNNCGACKNKCKFSQTCCRGQCVYVAYDKRHCGQCNHPCELGEFCVYGLCNYA</sequence>
<gene>
    <name evidence="4" type="ordered locus">At4g26880</name>
    <name evidence="5" type="ORF">F10M23.220</name>
</gene>
<name>STGL1_ARATH</name>